<gene>
    <name type="primary">eutQ</name>
    <name type="ordered locus">STM2468</name>
</gene>
<proteinExistence type="evidence at protein level"/>
<reference key="1">
    <citation type="journal article" date="1999" name="J. Bacteriol.">
        <title>The 17-gene ethanolamine (eut) operon of Salmonella typhimurium encodes five homologues of carboxysome shell proteins.</title>
        <authorList>
            <person name="Kofoid E.C."/>
            <person name="Rappleye C.A."/>
            <person name="Stojiljkovic I."/>
            <person name="Roth J.R."/>
        </authorList>
    </citation>
    <scope>NUCLEOTIDE SEQUENCE [GENOMIC DNA]</scope>
    <scope>DISRUPTION PHENOTYPE</scope>
    <source>
        <strain>LT2</strain>
    </source>
</reference>
<reference key="2">
    <citation type="journal article" date="2001" name="Nature">
        <title>Complete genome sequence of Salmonella enterica serovar Typhimurium LT2.</title>
        <authorList>
            <person name="McClelland M."/>
            <person name="Sanderson K.E."/>
            <person name="Spieth J."/>
            <person name="Clifton S.W."/>
            <person name="Latreille P."/>
            <person name="Courtney L."/>
            <person name="Porwollik S."/>
            <person name="Ali J."/>
            <person name="Dante M."/>
            <person name="Du F."/>
            <person name="Hou S."/>
            <person name="Layman D."/>
            <person name="Leonard S."/>
            <person name="Nguyen C."/>
            <person name="Scott K."/>
            <person name="Holmes A."/>
            <person name="Grewal N."/>
            <person name="Mulvaney E."/>
            <person name="Ryan E."/>
            <person name="Sun H."/>
            <person name="Florea L."/>
            <person name="Miller W."/>
            <person name="Stoneking T."/>
            <person name="Nhan M."/>
            <person name="Waterston R."/>
            <person name="Wilson R.K."/>
        </authorList>
    </citation>
    <scope>NUCLEOTIDE SEQUENCE [LARGE SCALE GENOMIC DNA]</scope>
    <source>
        <strain>LT2 / SGSC1412 / ATCC 700720</strain>
    </source>
</reference>
<reference key="3">
    <citation type="journal article" date="1988" name="J. Bacteriol.">
        <title>Ethanolamine utilization in Salmonella typhimurium.</title>
        <authorList>
            <person name="Roof D.M."/>
            <person name="Roth J.R."/>
        </authorList>
    </citation>
    <scope>FUNCTION</scope>
    <scope>PATHWAY</scope>
    <scope>OPERON</scope>
    <scope>INDUCTION BY ETHANOLAMINE AND COBALAMIN</scope>
    <source>
        <strain>LT2</strain>
    </source>
</reference>
<reference key="4">
    <citation type="journal article" date="2006" name="J. Bacteriol.">
        <title>Conserving a volatile metabolite: a role for carboxysome-like organelles in Salmonella enterica.</title>
        <authorList>
            <person name="Penrod J.T."/>
            <person name="Roth J.R."/>
        </authorList>
    </citation>
    <scope>DISRUPTION PHENOTYPE</scope>
    <source>
        <strain>LT2</strain>
    </source>
</reference>
<reference key="5">
    <citation type="journal article" date="2013" name="J. Bacteriol.">
        <title>Evidence that a metabolic microcompartment contains and recycles private cofactor pools.</title>
        <authorList>
            <person name="Huseby D.L."/>
            <person name="Roth J.R."/>
        </authorList>
    </citation>
    <scope>FUNCTION</scope>
    <source>
        <strain>LT2</strain>
    </source>
</reference>
<reference key="6">
    <citation type="journal article" date="2016" name="Mol. Microbiol.">
        <title>The EutQ and EutP proteins are novel acetate kinases involved in ethanolamine catabolism: physiological implications for the function of the ethanolamine metabolosome in Salmonella enterica.</title>
        <authorList>
            <person name="Moore T.C."/>
            <person name="Escalante-Semerena J.C."/>
        </authorList>
    </citation>
    <scope>FUNCTION</scope>
    <scope>CATALYTIC ACTIVITY</scope>
    <scope>SUBSTRATE SPECIFICITY</scope>
    <scope>NO COFACTOR</scope>
    <scope>BIOPHYSICOCHEMICAL PROPERTIES</scope>
    <scope>PROBABLE SUBCELLULAR LOCATION</scope>
    <scope>DISRUPTION PHENOTYPE</scope>
    <scope>MUTAGENESIS OF ASP-172; 173-GLU--ASP-175; GLU-173 AND ASP-175</scope>
    <source>
        <strain>LT2</strain>
    </source>
</reference>
<reference key="7">
    <citation type="journal article" date="2018" name="Infect. Immun.">
        <title>The Ethanolamine Permease EutH Promotes Vacuole Adaptation of Salmonella enterica and Listeria monocytogenes during Macrophage Infection.</title>
        <authorList>
            <person name="Anderson C.J."/>
            <person name="Satkovich J."/>
            <person name="Koeseoglu V.K."/>
            <person name="Agaisse H."/>
            <person name="Kendall M.M."/>
        </authorList>
    </citation>
    <scope>FUNCTION</scope>
    <source>
        <strain>SL1344</strain>
    </source>
</reference>
<reference key="8">
    <citation type="journal article" date="2016" name="Sci. Rep.">
        <title>Engineering formation of multiple recombinant Eut protein nanocompartments in E. coli.</title>
        <authorList>
            <person name="Held M."/>
            <person name="Kolb A."/>
            <person name="Perdue S."/>
            <person name="Hsu S.Y."/>
            <person name="Bloch S.E."/>
            <person name="Quin M.B."/>
            <person name="Schmidt-Dannert C."/>
        </authorList>
    </citation>
    <scope>FUNCTION</scope>
    <scope>INTERACTION WITH EUTM</scope>
    <scope>SUBCELLULAR LOCATION</scope>
    <scope>DISRUPTION PHENOTYPE</scope>
    <scope>BIOTECHNOLOGY</scope>
    <source>
        <strain>LT2</strain>
    </source>
</reference>
<reference evidence="13" key="9">
    <citation type="submission" date="2007-05" db="PDB data bank">
        <title>Crystal structure of Ethanolamine utilization protein eutQ (16421009) from Salmonella typhimurium LT2 at 1.90 A resolution.</title>
        <authorList>
            <consortium name="Joint Center For Structural Genomics (JCSG)"/>
        </authorList>
    </citation>
    <scope>X-RAY CRYSTALLOGRAPHY (1.90 ANGSTROMS) OF 98-229</scope>
    <scope>SUBUNIT</scope>
</reference>
<accession>Q9ZFV5</accession>
<keyword id="KW-0002">3D-structure</keyword>
<keyword id="KW-0067">ATP-binding</keyword>
<keyword id="KW-1283">Bacterial microcompartment</keyword>
<keyword id="KW-0418">Kinase</keyword>
<keyword id="KW-0547">Nucleotide-binding</keyword>
<keyword id="KW-1185">Reference proteome</keyword>
<keyword id="KW-0808">Transferase</keyword>
<keyword id="KW-0843">Virulence</keyword>
<protein>
    <recommendedName>
        <fullName evidence="7">Acetate kinase EutQ</fullName>
        <ecNumber evidence="3">2.7.2.1</ecNumber>
    </recommendedName>
    <alternativeName>
        <fullName>Ethanolamine utilization protein EutQ</fullName>
    </alternativeName>
</protein>
<organism>
    <name type="scientific">Salmonella typhimurium (strain LT2 / SGSC1412 / ATCC 700720)</name>
    <dbReference type="NCBI Taxonomy" id="99287"/>
    <lineage>
        <taxon>Bacteria</taxon>
        <taxon>Pseudomonadati</taxon>
        <taxon>Pseudomonadota</taxon>
        <taxon>Gammaproteobacteria</taxon>
        <taxon>Enterobacterales</taxon>
        <taxon>Enterobacteriaceae</taxon>
        <taxon>Salmonella</taxon>
    </lineage>
</organism>
<sequence>MKKLITANDIRAAHARGEQAMSVVLRASIITPEAREVAELLGFTITECDESVPASTSAQACKSESQRIREAIIAQLPEGQFTESLVAQLMEKVLKEKQSLELGTMQPSFTSVTGKGGVKVIDGSSVKFGRFDGAEPHCVGLTDLVTEQDGSSMAAGFMQWDNAFFPWTLNYDEIDMVLEGELHVRHEGETMIAKAGDVMFIPKGSSIEFGTPTSVRFLYVAWPANWQSV</sequence>
<dbReference type="EC" id="2.7.2.1" evidence="3"/>
<dbReference type="EMBL" id="AF093749">
    <property type="protein sequence ID" value="AAC78113.1"/>
    <property type="molecule type" value="Genomic_DNA"/>
</dbReference>
<dbReference type="EMBL" id="AE006468">
    <property type="protein sequence ID" value="AAL21362.1"/>
    <property type="molecule type" value="Genomic_DNA"/>
</dbReference>
<dbReference type="RefSeq" id="NP_461403.1">
    <property type="nucleotide sequence ID" value="NC_003197.2"/>
</dbReference>
<dbReference type="RefSeq" id="WP_000733867.1">
    <property type="nucleotide sequence ID" value="NC_003197.2"/>
</dbReference>
<dbReference type="PDB" id="2PYT">
    <property type="method" value="X-ray"/>
    <property type="resolution" value="1.90 A"/>
    <property type="chains" value="A/B=98-229"/>
</dbReference>
<dbReference type="PDBsum" id="2PYT"/>
<dbReference type="SMR" id="Q9ZFV5"/>
<dbReference type="STRING" id="99287.STM2468"/>
<dbReference type="PaxDb" id="99287-STM2468"/>
<dbReference type="DNASU" id="1253990"/>
<dbReference type="GeneID" id="1253990"/>
<dbReference type="KEGG" id="stm:STM2468"/>
<dbReference type="PATRIC" id="fig|99287.12.peg.2606"/>
<dbReference type="HOGENOM" id="CLU_082122_0_0_6"/>
<dbReference type="OMA" id="SKVTWSS"/>
<dbReference type="PhylomeDB" id="Q9ZFV5"/>
<dbReference type="BioCyc" id="MetaCyc:STM2468-MONOMER"/>
<dbReference type="BioCyc" id="SENT99287:STM2468-MONOMER"/>
<dbReference type="UniPathway" id="UPA00560"/>
<dbReference type="EvolutionaryTrace" id="Q9ZFV5"/>
<dbReference type="Proteomes" id="UP000001014">
    <property type="component" value="Chromosome"/>
</dbReference>
<dbReference type="GO" id="GO:0031471">
    <property type="term" value="C:ethanolamine degradation polyhedral organelle"/>
    <property type="evidence" value="ECO:0000353"/>
    <property type="project" value="UniProtKB"/>
</dbReference>
<dbReference type="GO" id="GO:0008776">
    <property type="term" value="F:acetate kinase activity"/>
    <property type="evidence" value="ECO:0007669"/>
    <property type="project" value="UniProtKB-EC"/>
</dbReference>
<dbReference type="GO" id="GO:0005524">
    <property type="term" value="F:ATP binding"/>
    <property type="evidence" value="ECO:0007669"/>
    <property type="project" value="UniProtKB-KW"/>
</dbReference>
<dbReference type="GO" id="GO:0046336">
    <property type="term" value="P:ethanolamine catabolic process"/>
    <property type="evidence" value="ECO:0007669"/>
    <property type="project" value="UniProtKB-UniPathway"/>
</dbReference>
<dbReference type="GO" id="GO:0006091">
    <property type="term" value="P:generation of precursor metabolites and energy"/>
    <property type="evidence" value="ECO:0000315"/>
    <property type="project" value="UniProtKB"/>
</dbReference>
<dbReference type="CDD" id="cd02228">
    <property type="entry name" value="cupin_EutQ"/>
    <property type="match status" value="1"/>
</dbReference>
<dbReference type="Gene3D" id="2.60.120.10">
    <property type="entry name" value="Jelly Rolls"/>
    <property type="match status" value="1"/>
</dbReference>
<dbReference type="InterPro" id="IPR010424">
    <property type="entry name" value="EutQ"/>
</dbReference>
<dbReference type="InterPro" id="IPR014710">
    <property type="entry name" value="RmlC-like_jellyroll"/>
</dbReference>
<dbReference type="InterPro" id="IPR011051">
    <property type="entry name" value="RmlC_Cupin_sf"/>
</dbReference>
<dbReference type="NCBIfam" id="NF012001">
    <property type="entry name" value="PRK15457.1"/>
    <property type="match status" value="1"/>
</dbReference>
<dbReference type="PANTHER" id="PTHR36169:SF1">
    <property type="entry name" value="ACETATE KINASE EUTQ"/>
    <property type="match status" value="1"/>
</dbReference>
<dbReference type="PANTHER" id="PTHR36169">
    <property type="entry name" value="ETHANOLAMINE UTILIZATION PROTEIN EUTQ"/>
    <property type="match status" value="1"/>
</dbReference>
<dbReference type="Pfam" id="PF06249">
    <property type="entry name" value="EutQ"/>
    <property type="match status" value="1"/>
</dbReference>
<dbReference type="SUPFAM" id="SSF51182">
    <property type="entry name" value="RmlC-like cupins"/>
    <property type="match status" value="1"/>
</dbReference>
<feature type="chain" id="PRO_0000087098" description="Acetate kinase EutQ">
    <location>
        <begin position="1"/>
        <end position="229"/>
    </location>
</feature>
<feature type="region of interest" description="Required for interaction with EutM" evidence="4">
    <location>
        <begin position="1"/>
        <end position="100"/>
    </location>
</feature>
<feature type="mutagenesis site" description="Complements deletion as well as wild-type." evidence="3">
    <original>D</original>
    <variation>A</variation>
    <location>
        <position position="172"/>
    </location>
</feature>
<feature type="mutagenesis site" description="Slight reduction in complementation of deletion." evidence="3">
    <original>EID</original>
    <variation>AIA</variation>
    <location>
        <begin position="173"/>
        <end position="175"/>
    </location>
</feature>
<feature type="mutagenesis site" description="Slight reduction in complementation of deletion." evidence="3">
    <original>E</original>
    <variation>A</variation>
    <location>
        <position position="173"/>
    </location>
</feature>
<feature type="mutagenesis site" description="Complements deletion as well as wild-type." evidence="3">
    <original>D</original>
    <variation>A</variation>
    <location>
        <position position="175"/>
    </location>
</feature>
<feature type="strand" evidence="14">
    <location>
        <begin position="111"/>
        <end position="113"/>
    </location>
</feature>
<feature type="strand" evidence="14">
    <location>
        <begin position="119"/>
        <end position="121"/>
    </location>
</feature>
<feature type="helix" evidence="14">
    <location>
        <begin position="123"/>
        <end position="125"/>
    </location>
</feature>
<feature type="helix" evidence="14">
    <location>
        <begin position="132"/>
        <end position="134"/>
    </location>
</feature>
<feature type="strand" evidence="14">
    <location>
        <begin position="140"/>
        <end position="145"/>
    </location>
</feature>
<feature type="helix" evidence="14">
    <location>
        <begin position="147"/>
        <end position="149"/>
    </location>
</feature>
<feature type="strand" evidence="14">
    <location>
        <begin position="152"/>
        <end position="168"/>
    </location>
</feature>
<feature type="strand" evidence="14">
    <location>
        <begin position="170"/>
        <end position="186"/>
    </location>
</feature>
<feature type="strand" evidence="14">
    <location>
        <begin position="189"/>
        <end position="194"/>
    </location>
</feature>
<feature type="strand" evidence="14">
    <location>
        <begin position="198"/>
        <end position="201"/>
    </location>
</feature>
<feature type="strand" evidence="14">
    <location>
        <begin position="206"/>
        <end position="223"/>
    </location>
</feature>
<evidence type="ECO:0000269" key="1">
    <source>
    </source>
</evidence>
<evidence type="ECO:0000269" key="2">
    <source>
    </source>
</evidence>
<evidence type="ECO:0000269" key="3">
    <source>
    </source>
</evidence>
<evidence type="ECO:0000269" key="4">
    <source>
    </source>
</evidence>
<evidence type="ECO:0000269" key="5">
    <source>
    </source>
</evidence>
<evidence type="ECO:0000269" key="6">
    <source>
    </source>
</evidence>
<evidence type="ECO:0000303" key="7">
    <source>
    </source>
</evidence>
<evidence type="ECO:0000305" key="8"/>
<evidence type="ECO:0000305" key="9">
    <source>
    </source>
</evidence>
<evidence type="ECO:0000305" key="10">
    <source>
    </source>
</evidence>
<evidence type="ECO:0000305" key="11">
    <source>
    </source>
</evidence>
<evidence type="ECO:0000305" key="12">
    <source ref="9"/>
</evidence>
<evidence type="ECO:0007744" key="13">
    <source>
        <dbReference type="PDB" id="2PYT"/>
    </source>
</evidence>
<evidence type="ECO:0007829" key="14">
    <source>
        <dbReference type="PDB" id="2PYT"/>
    </source>
</evidence>
<name>EUTQ_SALTY</name>
<comment type="function">
    <text evidence="3 4 9">A bidirectional acetate kinase that may drive flux through the ethanolamine (EA) degradation pathway under anoxic conditions found when this bacteria infects the host intestine. It may generate ATP that can be used by other enzymes (EutA and EutT) in the eut pathway. Can use GTP instead of ATP with reduced efficiency (PubMed:26448059). Might be required to correctly target EutE to bacterial microcompartments (BMC) (Probable). Required for the biogenesis of multiple mobile BMCs per cell. Might serve as an assembly hub for BMC shell proteins. Expression of eutK, eutL, eutM, eutN, eutS (eutSMNLK) in E.coli leads to formation of a single BMC; coexpression of eutQ with eutSMNLK permits E.coli to make cells with more than one mobile BMC, as is usual in vivo. EutS alone also forms BMCs, but in the presence of eutQ both BMCs and protein filaments are formed (PubMed:27063436).</text>
</comment>
<comment type="function">
    <text evidence="5 6">Expression of the eut operon allows this bacteria to use ethanolamine (EA) as a carbon, nitrogen and energy source. It relies on cobalamin (vitamin B12) both as a cofactor for the ethanolamine ammonia-lyase (EAL) activity and to induce the operon (PubMed:3045078). EA enhances bacterial survival in macrophages in a concentration-dependent manner, suggesting it is an important nutrient during infection (PubMed:29531136).</text>
</comment>
<comment type="catalytic activity">
    <reaction evidence="3">
        <text>acetate + ATP = acetyl phosphate + ADP</text>
        <dbReference type="Rhea" id="RHEA:11352"/>
        <dbReference type="ChEBI" id="CHEBI:22191"/>
        <dbReference type="ChEBI" id="CHEBI:30089"/>
        <dbReference type="ChEBI" id="CHEBI:30616"/>
        <dbReference type="ChEBI" id="CHEBI:456216"/>
        <dbReference type="EC" id="2.7.2.1"/>
    </reaction>
    <physiologicalReaction direction="left-to-right" evidence="3">
        <dbReference type="Rhea" id="RHEA:11353"/>
    </physiologicalReaction>
    <physiologicalReaction direction="right-to-left" evidence="3">
        <dbReference type="Rhea" id="RHEA:11354"/>
    </physiologicalReaction>
</comment>
<comment type="cofactor">
    <text evidence="3">Does not need divalent cations.</text>
</comment>
<comment type="biophysicochemical properties">
    <kinetics>
        <KM evidence="3">0.7 mM for acetate</KM>
        <KM evidence="3">0.5 mM for ATP</KM>
        <text evidence="3">kcat is 318 sec(-1).</text>
    </kinetics>
</comment>
<comment type="pathway">
    <text evidence="6">Amine and polyamine degradation; ethanolamine degradation.</text>
</comment>
<comment type="subunit">
    <text evidence="4 12">Homodimer (Probable). Interacts with the N-terminus of EutM; a probably cytoplasm-facing helix (EutM 'Val-49' to 'Gln-64') interacts with N-terminus of EutQ (PubMed:27063436).</text>
</comment>
<comment type="subcellular location">
    <subcellularLocation>
        <location evidence="10 11">Bacterial microcompartment</location>
    </subcellularLocation>
    <text evidence="11">May be found on the cytoplasmic face of the BMC.</text>
</comment>
<comment type="induction">
    <text evidence="6">Part of the 17-gene eut operon transcribed from a single promoter, induced by ethanolamine and adenosylcobalamin (AdoCbl, vitamin B12).</text>
</comment>
<comment type="disruption phenotype">
    <text evidence="1 2 3 4">A quadruple eutP-eutQ-eutT-eutD deletion is not impaired for aerobic growth on ethanolamine (EA) supplemented with cobalamin (vitamin B12) (PubMed:10464203). A non-polar deletion mutant grows on EA from pH 5.5 to pH 8.0, but does not grow at pH 8.5, releases increased amounts of acetaldehyde on EA plus vitamin B12 (PubMed:16585748). Does not grow on EA and tetrathionate under anoxic conditions; complemented by acetate/propionate kinases AckA, PduW or TdcD (PubMed:26448059). Only makes a single immobile BMC localized near the cell pole (PubMed:27063436).</text>
</comment>
<comment type="biotechnology">
    <text evidence="4">Artificial BMCs can be made in E.coli by expressing eutK, eutL, eutM, eutN, eutS (eutSMNLK). Cargo proteins can be targeted to them. The addition of eutQ to the eutSMNLK construct results in biogenesis of multiple BMCs. This can lead to the development of tailored BMCs for specific metabolic reactions.</text>
</comment>
<comment type="similarity">
    <text evidence="8">Belongs to the EutQ cupin-like family.</text>
</comment>